<sequence>MANNKSAKKRAIQAEKRRQHNASRRSMMRTYMKKTVAAIAAGDKEAATAAFAVVTPILDRMATKGLIHKNKAARHKSRFFAAINAL</sequence>
<proteinExistence type="inferred from homology"/>
<evidence type="ECO:0000255" key="1">
    <source>
        <dbReference type="HAMAP-Rule" id="MF_00500"/>
    </source>
</evidence>
<evidence type="ECO:0000256" key="2">
    <source>
        <dbReference type="SAM" id="MobiDB-lite"/>
    </source>
</evidence>
<evidence type="ECO:0000305" key="3"/>
<protein>
    <recommendedName>
        <fullName evidence="1">Small ribosomal subunit protein bS20</fullName>
    </recommendedName>
    <alternativeName>
        <fullName evidence="3">30S ribosomal protein S20</fullName>
    </alternativeName>
</protein>
<feature type="chain" id="PRO_1000194274" description="Small ribosomal subunit protein bS20">
    <location>
        <begin position="1"/>
        <end position="86"/>
    </location>
</feature>
<feature type="region of interest" description="Disordered" evidence="2">
    <location>
        <begin position="1"/>
        <end position="27"/>
    </location>
</feature>
<reference key="1">
    <citation type="journal article" date="2008" name="PLoS ONE">
        <title>A recalibrated molecular clock and independent origins for the cholera pandemic clones.</title>
        <authorList>
            <person name="Feng L."/>
            <person name="Reeves P.R."/>
            <person name="Lan R."/>
            <person name="Ren Y."/>
            <person name="Gao C."/>
            <person name="Zhou Z."/>
            <person name="Ren Y."/>
            <person name="Cheng J."/>
            <person name="Wang W."/>
            <person name="Wang J."/>
            <person name="Qian W."/>
            <person name="Li D."/>
            <person name="Wang L."/>
        </authorList>
    </citation>
    <scope>NUCLEOTIDE SEQUENCE [LARGE SCALE GENOMIC DNA]</scope>
    <source>
        <strain>M66-2</strain>
    </source>
</reference>
<keyword id="KW-0687">Ribonucleoprotein</keyword>
<keyword id="KW-0689">Ribosomal protein</keyword>
<keyword id="KW-0694">RNA-binding</keyword>
<keyword id="KW-0699">rRNA-binding</keyword>
<name>RS20_VIBCM</name>
<comment type="function">
    <text evidence="1">Binds directly to 16S ribosomal RNA.</text>
</comment>
<comment type="similarity">
    <text evidence="1">Belongs to the bacterial ribosomal protein bS20 family.</text>
</comment>
<accession>C3LST4</accession>
<gene>
    <name evidence="1" type="primary">rpsT</name>
    <name type="ordered locus">VCM66_0637</name>
</gene>
<dbReference type="EMBL" id="CP001233">
    <property type="protein sequence ID" value="ACP04960.1"/>
    <property type="molecule type" value="Genomic_DNA"/>
</dbReference>
<dbReference type="RefSeq" id="WP_000002742.1">
    <property type="nucleotide sequence ID" value="NC_012578.1"/>
</dbReference>
<dbReference type="SMR" id="C3LST4"/>
<dbReference type="GeneID" id="94014548"/>
<dbReference type="KEGG" id="vcm:VCM66_0637"/>
<dbReference type="HOGENOM" id="CLU_160655_4_0_6"/>
<dbReference type="Proteomes" id="UP000001217">
    <property type="component" value="Chromosome I"/>
</dbReference>
<dbReference type="GO" id="GO:0005829">
    <property type="term" value="C:cytosol"/>
    <property type="evidence" value="ECO:0007669"/>
    <property type="project" value="TreeGrafter"/>
</dbReference>
<dbReference type="GO" id="GO:0015935">
    <property type="term" value="C:small ribosomal subunit"/>
    <property type="evidence" value="ECO:0007669"/>
    <property type="project" value="TreeGrafter"/>
</dbReference>
<dbReference type="GO" id="GO:0070181">
    <property type="term" value="F:small ribosomal subunit rRNA binding"/>
    <property type="evidence" value="ECO:0007669"/>
    <property type="project" value="TreeGrafter"/>
</dbReference>
<dbReference type="GO" id="GO:0003735">
    <property type="term" value="F:structural constituent of ribosome"/>
    <property type="evidence" value="ECO:0007669"/>
    <property type="project" value="InterPro"/>
</dbReference>
<dbReference type="GO" id="GO:0006412">
    <property type="term" value="P:translation"/>
    <property type="evidence" value="ECO:0007669"/>
    <property type="project" value="UniProtKB-UniRule"/>
</dbReference>
<dbReference type="FunFam" id="1.20.58.110:FF:000001">
    <property type="entry name" value="30S ribosomal protein S20"/>
    <property type="match status" value="1"/>
</dbReference>
<dbReference type="Gene3D" id="1.20.58.110">
    <property type="entry name" value="Ribosomal protein S20"/>
    <property type="match status" value="1"/>
</dbReference>
<dbReference type="HAMAP" id="MF_00500">
    <property type="entry name" value="Ribosomal_bS20"/>
    <property type="match status" value="1"/>
</dbReference>
<dbReference type="InterPro" id="IPR002583">
    <property type="entry name" value="Ribosomal_bS20"/>
</dbReference>
<dbReference type="InterPro" id="IPR036510">
    <property type="entry name" value="Ribosomal_bS20_sf"/>
</dbReference>
<dbReference type="NCBIfam" id="TIGR00029">
    <property type="entry name" value="S20"/>
    <property type="match status" value="1"/>
</dbReference>
<dbReference type="PANTHER" id="PTHR33398">
    <property type="entry name" value="30S RIBOSOMAL PROTEIN S20"/>
    <property type="match status" value="1"/>
</dbReference>
<dbReference type="PANTHER" id="PTHR33398:SF1">
    <property type="entry name" value="SMALL RIBOSOMAL SUBUNIT PROTEIN BS20C"/>
    <property type="match status" value="1"/>
</dbReference>
<dbReference type="Pfam" id="PF01649">
    <property type="entry name" value="Ribosomal_S20p"/>
    <property type="match status" value="1"/>
</dbReference>
<dbReference type="SUPFAM" id="SSF46992">
    <property type="entry name" value="Ribosomal protein S20"/>
    <property type="match status" value="1"/>
</dbReference>
<organism>
    <name type="scientific">Vibrio cholerae serotype O1 (strain M66-2)</name>
    <dbReference type="NCBI Taxonomy" id="579112"/>
    <lineage>
        <taxon>Bacteria</taxon>
        <taxon>Pseudomonadati</taxon>
        <taxon>Pseudomonadota</taxon>
        <taxon>Gammaproteobacteria</taxon>
        <taxon>Vibrionales</taxon>
        <taxon>Vibrionaceae</taxon>
        <taxon>Vibrio</taxon>
    </lineage>
</organism>